<feature type="chain" id="PRO_0000238655" description="Vacuolar membrane protein YPL162C">
    <location>
        <begin position="1"/>
        <end position="273"/>
    </location>
</feature>
<feature type="topological domain" description="Vacuolar" evidence="1">
    <location>
        <begin position="1"/>
        <end position="13"/>
    </location>
</feature>
<feature type="transmembrane region" description="Helical" evidence="1">
    <location>
        <begin position="14"/>
        <end position="34"/>
    </location>
</feature>
<feature type="topological domain" description="Cytoplasmic" evidence="1">
    <location>
        <begin position="35"/>
        <end position="51"/>
    </location>
</feature>
<feature type="transmembrane region" description="Helical" evidence="1">
    <location>
        <begin position="52"/>
        <end position="72"/>
    </location>
</feature>
<feature type="topological domain" description="Vacuolar" evidence="1">
    <location>
        <begin position="73"/>
        <end position="97"/>
    </location>
</feature>
<feature type="transmembrane region" description="Helical" evidence="1">
    <location>
        <begin position="98"/>
        <end position="118"/>
    </location>
</feature>
<feature type="topological domain" description="Cytoplasmic" evidence="1">
    <location>
        <begin position="119"/>
        <end position="156"/>
    </location>
</feature>
<feature type="transmembrane region" description="Helical" evidence="1">
    <location>
        <begin position="157"/>
        <end position="177"/>
    </location>
</feature>
<feature type="topological domain" description="Vacuolar" evidence="1">
    <location>
        <begin position="178"/>
        <end position="198"/>
    </location>
</feature>
<feature type="transmembrane region" description="Helical" evidence="1">
    <location>
        <begin position="199"/>
        <end position="219"/>
    </location>
</feature>
<feature type="topological domain" description="Cytoplasmic" evidence="1">
    <location>
        <begin position="220"/>
        <end position="273"/>
    </location>
</feature>
<name>YP162_YEAST</name>
<keyword id="KW-0472">Membrane</keyword>
<keyword id="KW-1185">Reference proteome</keyword>
<keyword id="KW-0812">Transmembrane</keyword>
<keyword id="KW-1133">Transmembrane helix</keyword>
<keyword id="KW-0926">Vacuole</keyword>
<sequence>MYVSNGKDTCQLLGPVSLFVQTLMGMTAVIVLLVKRNYEHPRRKMIVWSYDIGKQIIGSLGIHFLNLGISILKKRRRSLFAITAKGNDDEDQCDWYFLNLLLDTTVGIPILWLCLYIIEKVLKSLHFQNIESGNYFPSKTVGSHPRKPLFSAFVKQLLIFIVGLGVMKFCVFLILNYLEDLAYWFADLILGWSDSWPNFQVFLVMFVFPILLNCFQYFCVDNVIRLHSESLTITNAENFETNTFLNDEIPDLSEVSNEVPNKDNNISSYGSII</sequence>
<evidence type="ECO:0000255" key="1"/>
<evidence type="ECO:0000269" key="2">
    <source>
    </source>
</evidence>
<evidence type="ECO:0000269" key="3">
    <source>
    </source>
</evidence>
<dbReference type="EMBL" id="X96770">
    <property type="protein sequence ID" value="CAA65559.1"/>
    <property type="molecule type" value="Genomic_DNA"/>
</dbReference>
<dbReference type="EMBL" id="Z73518">
    <property type="protein sequence ID" value="CAA97867.1"/>
    <property type="molecule type" value="Genomic_DNA"/>
</dbReference>
<dbReference type="EMBL" id="BK006949">
    <property type="protein sequence ID" value="DAA11272.1"/>
    <property type="molecule type" value="Genomic_DNA"/>
</dbReference>
<dbReference type="PIR" id="S65173">
    <property type="entry name" value="S65173"/>
</dbReference>
<dbReference type="RefSeq" id="NP_015163.1">
    <property type="nucleotide sequence ID" value="NM_001183976.1"/>
</dbReference>
<dbReference type="BioGRID" id="36021">
    <property type="interactions" value="53"/>
</dbReference>
<dbReference type="DIP" id="DIP-8887N"/>
<dbReference type="FunCoup" id="Q12042">
    <property type="interactions" value="82"/>
</dbReference>
<dbReference type="IntAct" id="Q12042">
    <property type="interactions" value="1"/>
</dbReference>
<dbReference type="STRING" id="4932.YPL162C"/>
<dbReference type="iPTMnet" id="Q12042"/>
<dbReference type="PaxDb" id="4932-YPL162C"/>
<dbReference type="PeptideAtlas" id="Q12042"/>
<dbReference type="EnsemblFungi" id="YPL162C_mRNA">
    <property type="protein sequence ID" value="YPL162C"/>
    <property type="gene ID" value="YPL162C"/>
</dbReference>
<dbReference type="GeneID" id="855941"/>
<dbReference type="KEGG" id="sce:YPL162C"/>
<dbReference type="AGR" id="SGD:S000006083"/>
<dbReference type="SGD" id="S000006083">
    <property type="gene designation" value="YPL162C"/>
</dbReference>
<dbReference type="VEuPathDB" id="FungiDB:YPL162C"/>
<dbReference type="eggNOG" id="ENOG502S1HE">
    <property type="taxonomic scope" value="Eukaryota"/>
</dbReference>
<dbReference type="GeneTree" id="ENSGT00940000153920"/>
<dbReference type="HOGENOM" id="CLU_040321_2_1_1"/>
<dbReference type="InParanoid" id="Q12042"/>
<dbReference type="OMA" id="LNCFQYF"/>
<dbReference type="OrthoDB" id="431202at2759"/>
<dbReference type="BioCyc" id="YEAST:G3O-34058-MONOMER"/>
<dbReference type="BioGRID-ORCS" id="855941">
    <property type="hits" value="0 hits in 10 CRISPR screens"/>
</dbReference>
<dbReference type="PRO" id="PR:Q12042"/>
<dbReference type="Proteomes" id="UP000002311">
    <property type="component" value="Chromosome XVI"/>
</dbReference>
<dbReference type="RNAct" id="Q12042">
    <property type="molecule type" value="protein"/>
</dbReference>
<dbReference type="GO" id="GO:0000329">
    <property type="term" value="C:fungal-type vacuole membrane"/>
    <property type="evidence" value="ECO:0007005"/>
    <property type="project" value="SGD"/>
</dbReference>
<dbReference type="GO" id="GO:0016020">
    <property type="term" value="C:membrane"/>
    <property type="evidence" value="ECO:0000318"/>
    <property type="project" value="GO_Central"/>
</dbReference>
<dbReference type="InterPro" id="IPR022127">
    <property type="entry name" value="STIMATE/YPL162C"/>
</dbReference>
<dbReference type="PANTHER" id="PTHR31735">
    <property type="entry name" value="VACUOLAR MEMBRANE PROTEIN YPL162C"/>
    <property type="match status" value="1"/>
</dbReference>
<dbReference type="PANTHER" id="PTHR31735:SF1">
    <property type="entry name" value="VACUOLAR MEMBRANE PROTEIN YPL162C"/>
    <property type="match status" value="1"/>
</dbReference>
<dbReference type="Pfam" id="PF12400">
    <property type="entry name" value="STIMATE"/>
    <property type="match status" value="1"/>
</dbReference>
<protein>
    <recommendedName>
        <fullName>Vacuolar membrane protein YPL162C</fullName>
    </recommendedName>
</protein>
<accession>Q12042</accession>
<accession>D6W3K6</accession>
<gene>
    <name type="ordered locus">YPL162C</name>
</gene>
<proteinExistence type="evidence at protein level"/>
<reference key="1">
    <citation type="journal article" date="1996" name="Yeast">
        <title>The sequence of 55 kb on the left arm of yeast chromosome XVI identifies a small nuclear RNA, a new putative protein kinase and two new putative regulators.</title>
        <authorList>
            <person name="Purnelle B."/>
            <person name="Coster F."/>
            <person name="Goffeau A."/>
        </authorList>
    </citation>
    <scope>NUCLEOTIDE SEQUENCE [GENOMIC DNA]</scope>
    <source>
        <strain>ATCC 204511 / S288c / AB972</strain>
    </source>
</reference>
<reference key="2">
    <citation type="journal article" date="1997" name="Nature">
        <title>The nucleotide sequence of Saccharomyces cerevisiae chromosome XVI.</title>
        <authorList>
            <person name="Bussey H."/>
            <person name="Storms R.K."/>
            <person name="Ahmed A."/>
            <person name="Albermann K."/>
            <person name="Allen E."/>
            <person name="Ansorge W."/>
            <person name="Araujo R."/>
            <person name="Aparicio A."/>
            <person name="Barrell B.G."/>
            <person name="Badcock K."/>
            <person name="Benes V."/>
            <person name="Botstein D."/>
            <person name="Bowman S."/>
            <person name="Brueckner M."/>
            <person name="Carpenter J."/>
            <person name="Cherry J.M."/>
            <person name="Chung E."/>
            <person name="Churcher C.M."/>
            <person name="Coster F."/>
            <person name="Davis K."/>
            <person name="Davis R.W."/>
            <person name="Dietrich F.S."/>
            <person name="Delius H."/>
            <person name="DiPaolo T."/>
            <person name="Dubois E."/>
            <person name="Duesterhoeft A."/>
            <person name="Duncan M."/>
            <person name="Floeth M."/>
            <person name="Fortin N."/>
            <person name="Friesen J.D."/>
            <person name="Fritz C."/>
            <person name="Goffeau A."/>
            <person name="Hall J."/>
            <person name="Hebling U."/>
            <person name="Heumann K."/>
            <person name="Hilbert H."/>
            <person name="Hillier L.W."/>
            <person name="Hunicke-Smith S."/>
            <person name="Hyman R.W."/>
            <person name="Johnston M."/>
            <person name="Kalman S."/>
            <person name="Kleine K."/>
            <person name="Komp C."/>
            <person name="Kurdi O."/>
            <person name="Lashkari D."/>
            <person name="Lew H."/>
            <person name="Lin A."/>
            <person name="Lin D."/>
            <person name="Louis E.J."/>
            <person name="Marathe R."/>
            <person name="Messenguy F."/>
            <person name="Mewes H.-W."/>
            <person name="Mirtipati S."/>
            <person name="Moestl D."/>
            <person name="Mueller-Auer S."/>
            <person name="Namath A."/>
            <person name="Nentwich U."/>
            <person name="Oefner P."/>
            <person name="Pearson D."/>
            <person name="Petel F.X."/>
            <person name="Pohl T.M."/>
            <person name="Purnelle B."/>
            <person name="Rajandream M.A."/>
            <person name="Rechmann S."/>
            <person name="Rieger M."/>
            <person name="Riles L."/>
            <person name="Roberts D."/>
            <person name="Schaefer M."/>
            <person name="Scharfe M."/>
            <person name="Scherens B."/>
            <person name="Schramm S."/>
            <person name="Schroeder M."/>
            <person name="Sdicu A.-M."/>
            <person name="Tettelin H."/>
            <person name="Urrestarazu L.A."/>
            <person name="Ushinsky S."/>
            <person name="Vierendeels F."/>
            <person name="Vissers S."/>
            <person name="Voss H."/>
            <person name="Walsh S.V."/>
            <person name="Wambutt R."/>
            <person name="Wang Y."/>
            <person name="Wedler E."/>
            <person name="Wedler H."/>
            <person name="Winnett E."/>
            <person name="Zhong W.-W."/>
            <person name="Zollner A."/>
            <person name="Vo D.H."/>
            <person name="Hani J."/>
        </authorList>
    </citation>
    <scope>NUCLEOTIDE SEQUENCE [LARGE SCALE GENOMIC DNA]</scope>
    <source>
        <strain>ATCC 204508 / S288c</strain>
    </source>
</reference>
<reference key="3">
    <citation type="journal article" date="2014" name="G3 (Bethesda)">
        <title>The reference genome sequence of Saccharomyces cerevisiae: Then and now.</title>
        <authorList>
            <person name="Engel S.R."/>
            <person name="Dietrich F.S."/>
            <person name="Fisk D.G."/>
            <person name="Binkley G."/>
            <person name="Balakrishnan R."/>
            <person name="Costanzo M.C."/>
            <person name="Dwight S.S."/>
            <person name="Hitz B.C."/>
            <person name="Karra K."/>
            <person name="Nash R.S."/>
            <person name="Weng S."/>
            <person name="Wong E.D."/>
            <person name="Lloyd P."/>
            <person name="Skrzypek M.S."/>
            <person name="Miyasato S.R."/>
            <person name="Simison M."/>
            <person name="Cherry J.M."/>
        </authorList>
    </citation>
    <scope>GENOME REANNOTATION</scope>
    <source>
        <strain>ATCC 204508 / S288c</strain>
    </source>
</reference>
<reference key="4">
    <citation type="journal article" date="2003" name="Nature">
        <title>Global analysis of protein localization in budding yeast.</title>
        <authorList>
            <person name="Huh W.-K."/>
            <person name="Falvo J.V."/>
            <person name="Gerke L.C."/>
            <person name="Carroll A.S."/>
            <person name="Howson R.W."/>
            <person name="Weissman J.S."/>
            <person name="O'Shea E.K."/>
        </authorList>
    </citation>
    <scope>SUBCELLULAR LOCATION [LARGE SCALE ANALYSIS]</scope>
</reference>
<reference key="5">
    <citation type="journal article" date="2003" name="Nature">
        <title>Global analysis of protein expression in yeast.</title>
        <authorList>
            <person name="Ghaemmaghami S."/>
            <person name="Huh W.-K."/>
            <person name="Bower K."/>
            <person name="Howson R.W."/>
            <person name="Belle A."/>
            <person name="Dephoure N."/>
            <person name="O'Shea E.K."/>
            <person name="Weissman J.S."/>
        </authorList>
    </citation>
    <scope>LEVEL OF PROTEIN EXPRESSION [LARGE SCALE ANALYSIS]</scope>
</reference>
<reference key="6">
    <citation type="journal article" date="2006" name="Proc. Natl. Acad. Sci. U.S.A.">
        <title>A global topology map of the Saccharomyces cerevisiae membrane proteome.</title>
        <authorList>
            <person name="Kim H."/>
            <person name="Melen K."/>
            <person name="Oesterberg M."/>
            <person name="von Heijne G."/>
        </authorList>
    </citation>
    <scope>TOPOLOGY [LARGE SCALE ANALYSIS]</scope>
    <source>
        <strain>ATCC 208353 / W303-1A</strain>
    </source>
</reference>
<organism>
    <name type="scientific">Saccharomyces cerevisiae (strain ATCC 204508 / S288c)</name>
    <name type="common">Baker's yeast</name>
    <dbReference type="NCBI Taxonomy" id="559292"/>
    <lineage>
        <taxon>Eukaryota</taxon>
        <taxon>Fungi</taxon>
        <taxon>Dikarya</taxon>
        <taxon>Ascomycota</taxon>
        <taxon>Saccharomycotina</taxon>
        <taxon>Saccharomycetes</taxon>
        <taxon>Saccharomycetales</taxon>
        <taxon>Saccharomycetaceae</taxon>
        <taxon>Saccharomyces</taxon>
    </lineage>
</organism>
<comment type="subcellular location">
    <subcellularLocation>
        <location evidence="2">Vacuole membrane</location>
        <topology evidence="2">Multi-pass membrane protein</topology>
    </subcellularLocation>
</comment>
<comment type="miscellaneous">
    <text evidence="3">Present with 1440 molecules/cell in log phase SD medium.</text>
</comment>